<sequence>MPQYFAIIGKKDNPVYEIEFTNAENPQGFPQDLKELNPFILHASLDIVEDLQWQINPTSQLNGNGGNGSNGGGGFLRSRAVNNTDNCYLGKVDHFYGLAITAYISYSGMKFVMIHGNSANSSVVIDDNNMRSFYQEVHELYVKTLMNPFYKITDPIRSPAFDSRVRTLARKHLSK</sequence>
<feature type="chain" id="PRO_0000211568" description="Trafficking protein particle complex subunit 20">
    <location>
        <begin position="1"/>
        <end position="175"/>
    </location>
</feature>
<comment type="function">
    <text evidence="1 3 4 5">Component of the TRAPP I, TRAPP II and TRAPP III complexes which act as guanine nucleotide exchange factors (GEF) for YPT1. TRAPP I plays a key role in the late stages of endoplasmic reticulum to Golgi traffic. TRAPP II plays a role in intra-Golgi transport. TRAPP III plays a role in autophagosome formation.</text>
</comment>
<comment type="subunit">
    <text evidence="1 3 4 5">Part of the multisubunit TRAPP (transport protein particle) I complex composed of BET3, BET5, TRS20, TRS23, TRS31 and TRS33. Part of the multisubunit TRAPP (transport protein particle) II complex composed of BET3, BET5, TRS20, TRS23, TRS31, TRS33, TRS65, TRS85, TRS120 and TRS130. Part of the multisubunit TRAPP (transport protein particle) III complex composed of BET3, BET5, TRS20, TRS23, TRS31, TRS33 and TRS85.</text>
</comment>
<comment type="interaction">
    <interactant intactId="EBI-19468">
        <id>P38334</id>
    </interactant>
    <interactant intactId="EBI-3567">
        <id>P36149</id>
        <label>BET3</label>
    </interactant>
    <organismsDiffer>false</organismsDiffer>
    <experiments>12</experiments>
</comment>
<comment type="interaction">
    <interactant intactId="EBI-19468">
        <id>P38334</id>
    </interactant>
    <interactant intactId="EBI-19461">
        <id>Q03660</id>
        <label>TRS130</label>
    </interactant>
    <organismsDiffer>false</organismsDiffer>
    <experiments>3</experiments>
</comment>
<comment type="interaction">
    <interactant intactId="EBI-19468">
        <id>P38334</id>
    </interactant>
    <interactant intactId="EBI-38770">
        <id>Q03337</id>
        <label>TRS31</label>
    </interactant>
    <organismsDiffer>false</organismsDiffer>
    <experiments>5</experiments>
</comment>
<comment type="interaction">
    <interactant intactId="EBI-19468">
        <id>P38334</id>
    </interactant>
    <interactant intactId="EBI-19492">
        <id>P46944</id>
        <label>TRS85</label>
    </interactant>
    <organismsDiffer>false</organismsDiffer>
    <experiments>7</experiments>
</comment>
<comment type="subcellular location">
    <subcellularLocation>
        <location>Golgi apparatus</location>
        <location>cis-Golgi network</location>
    </subcellularLocation>
    <subcellularLocation>
        <location>Endoplasmic reticulum</location>
    </subcellularLocation>
    <subcellularLocation>
        <location>Preautophagosomal structure</location>
    </subcellularLocation>
</comment>
<comment type="miscellaneous">
    <text evidence="2">Present with 1200 molecules/cell in log phase SD medium.</text>
</comment>
<comment type="similarity">
    <text evidence="6">Belongs to the TRAPP small subunits family. Sedlin subfamily.</text>
</comment>
<reference key="1">
    <citation type="journal article" date="1993" name="Yeast">
        <title>The complete sequence of a 19,482 bp segment located on the right arm of chromosome II from Saccharomyces cerevisiae.</title>
        <authorList>
            <person name="Doignon F."/>
            <person name="Biteau N."/>
            <person name="Crouzet M."/>
            <person name="Aigle M."/>
        </authorList>
    </citation>
    <scope>NUCLEOTIDE SEQUENCE [GENOMIC DNA]</scope>
    <source>
        <strain>ATCC 204508 / S288c</strain>
    </source>
</reference>
<reference key="2">
    <citation type="journal article" date="1994" name="EMBO J.">
        <title>Complete DNA sequence of yeast chromosome II.</title>
        <authorList>
            <person name="Feldmann H."/>
            <person name="Aigle M."/>
            <person name="Aljinovic G."/>
            <person name="Andre B."/>
            <person name="Baclet M.C."/>
            <person name="Barthe C."/>
            <person name="Baur A."/>
            <person name="Becam A.-M."/>
            <person name="Biteau N."/>
            <person name="Boles E."/>
            <person name="Brandt T."/>
            <person name="Brendel M."/>
            <person name="Brueckner M."/>
            <person name="Bussereau F."/>
            <person name="Christiansen C."/>
            <person name="Contreras R."/>
            <person name="Crouzet M."/>
            <person name="Cziepluch C."/>
            <person name="Demolis N."/>
            <person name="Delaveau T."/>
            <person name="Doignon F."/>
            <person name="Domdey H."/>
            <person name="Duesterhus S."/>
            <person name="Dubois E."/>
            <person name="Dujon B."/>
            <person name="El Bakkoury M."/>
            <person name="Entian K.-D."/>
            <person name="Feuermann M."/>
            <person name="Fiers W."/>
            <person name="Fobo G.M."/>
            <person name="Fritz C."/>
            <person name="Gassenhuber J."/>
            <person name="Glansdorff N."/>
            <person name="Goffeau A."/>
            <person name="Grivell L.A."/>
            <person name="de Haan M."/>
            <person name="Hein C."/>
            <person name="Herbert C.J."/>
            <person name="Hollenberg C.P."/>
            <person name="Holmstroem K."/>
            <person name="Jacq C."/>
            <person name="Jacquet M."/>
            <person name="Jauniaux J.-C."/>
            <person name="Jonniaux J.-L."/>
            <person name="Kallesoee T."/>
            <person name="Kiesau P."/>
            <person name="Kirchrath L."/>
            <person name="Koetter P."/>
            <person name="Korol S."/>
            <person name="Liebl S."/>
            <person name="Logghe M."/>
            <person name="Lohan A.J.E."/>
            <person name="Louis E.J."/>
            <person name="Li Z.Y."/>
            <person name="Maat M.J."/>
            <person name="Mallet L."/>
            <person name="Mannhaupt G."/>
            <person name="Messenguy F."/>
            <person name="Miosga T."/>
            <person name="Molemans F."/>
            <person name="Mueller S."/>
            <person name="Nasr F."/>
            <person name="Obermaier B."/>
            <person name="Perea J."/>
            <person name="Pierard A."/>
            <person name="Piravandi E."/>
            <person name="Pohl F.M."/>
            <person name="Pohl T.M."/>
            <person name="Potier S."/>
            <person name="Proft M."/>
            <person name="Purnelle B."/>
            <person name="Ramezani Rad M."/>
            <person name="Rieger M."/>
            <person name="Rose M."/>
            <person name="Schaaff-Gerstenschlaeger I."/>
            <person name="Scherens B."/>
            <person name="Schwarzlose C."/>
            <person name="Skala J."/>
            <person name="Slonimski P.P."/>
            <person name="Smits P.H.M."/>
            <person name="Souciet J.-L."/>
            <person name="Steensma H.Y."/>
            <person name="Stucka R."/>
            <person name="Urrestarazu L.A."/>
            <person name="van der Aart Q.J.M."/>
            <person name="Van Dyck L."/>
            <person name="Vassarotti A."/>
            <person name="Vetter I."/>
            <person name="Vierendeels F."/>
            <person name="Vissers S."/>
            <person name="Wagner G."/>
            <person name="de Wergifosse P."/>
            <person name="Wolfe K.H."/>
            <person name="Zagulski M."/>
            <person name="Zimmermann F.K."/>
            <person name="Mewes H.-W."/>
            <person name="Kleine K."/>
        </authorList>
    </citation>
    <scope>NUCLEOTIDE SEQUENCE [LARGE SCALE GENOMIC DNA]</scope>
    <source>
        <strain>ATCC 204508 / S288c</strain>
    </source>
</reference>
<reference key="3">
    <citation type="journal article" date="2014" name="G3 (Bethesda)">
        <title>The reference genome sequence of Saccharomyces cerevisiae: Then and now.</title>
        <authorList>
            <person name="Engel S.R."/>
            <person name="Dietrich F.S."/>
            <person name="Fisk D.G."/>
            <person name="Binkley G."/>
            <person name="Balakrishnan R."/>
            <person name="Costanzo M.C."/>
            <person name="Dwight S.S."/>
            <person name="Hitz B.C."/>
            <person name="Karra K."/>
            <person name="Nash R.S."/>
            <person name="Weng S."/>
            <person name="Wong E.D."/>
            <person name="Lloyd P."/>
            <person name="Skrzypek M.S."/>
            <person name="Miyasato S.R."/>
            <person name="Simison M."/>
            <person name="Cherry J.M."/>
        </authorList>
    </citation>
    <scope>GENOME REANNOTATION</scope>
    <source>
        <strain>ATCC 204508 / S288c</strain>
    </source>
</reference>
<reference key="4">
    <citation type="journal article" date="1998" name="EMBO J.">
        <title>TRAPP, a highly conserved novel complex on the cis-Golgi that mediates vesicle docking and fusion.</title>
        <authorList>
            <person name="Sacher M."/>
            <person name="Jiang Y."/>
            <person name="Barrowman J."/>
            <person name="Scarpa A."/>
            <person name="Burston J."/>
            <person name="Zhang L."/>
            <person name="Schieltz D."/>
            <person name="Yates J.R. III"/>
            <person name="Abeliovich H."/>
            <person name="Ferro-Novick S."/>
        </authorList>
    </citation>
    <scope>FUNCTION</scope>
    <scope>IDENTIFICATION IN THE TRAPP II COMPLEX</scope>
</reference>
<reference key="5">
    <citation type="journal article" date="2001" name="Mol. Cell">
        <title>TRAPP I implicated in the specificity of tethering in ER-to-Golgi transport.</title>
        <authorList>
            <person name="Sacher M."/>
            <person name="Barrowman J."/>
            <person name="Wang W."/>
            <person name="Horecka J."/>
            <person name="Zhang Y."/>
            <person name="Pypaert M."/>
            <person name="Ferro-Novick S."/>
        </authorList>
    </citation>
    <scope>FUNCTION OF THE TRAPP II COMPLEX</scope>
    <scope>IDENTIFICATION IN THE TRAPP II COMPLEX</scope>
    <scope>FUNCTION OF THE TRAPP I COMPLEX</scope>
    <scope>IDENTIFICATION IN THE TRAPP I COMPLEX</scope>
    <scope>SUBCELLULAR LOCATION</scope>
</reference>
<reference key="6">
    <citation type="journal article" date="2003" name="Nature">
        <title>Global analysis of protein expression in yeast.</title>
        <authorList>
            <person name="Ghaemmaghami S."/>
            <person name="Huh W.-K."/>
            <person name="Bower K."/>
            <person name="Howson R.W."/>
            <person name="Belle A."/>
            <person name="Dephoure N."/>
            <person name="O'Shea E.K."/>
            <person name="Weissman J.S."/>
        </authorList>
    </citation>
    <scope>LEVEL OF PROTEIN EXPRESSION [LARGE SCALE ANALYSIS]</scope>
</reference>
<reference key="7">
    <citation type="journal article" date="2010" name="Nat. Struct. Mol. Biol.">
        <title>Molecular architecture of the TRAPPII complex and implications for vesicle tethering.</title>
        <authorList>
            <person name="Yip C.K."/>
            <person name="Berscheminski J."/>
            <person name="Walz T."/>
        </authorList>
    </citation>
    <scope>IDENTIFICATION IN THE TRAP II COMPLEX</scope>
    <scope>FUNCTION OF THE TRAP II COMPLEX</scope>
</reference>
<reference key="8">
    <citation type="journal article" date="2010" name="Proc. Natl. Acad. Sci. U.S.A.">
        <title>Trs85 directs a Ypt1 GEF, TRAPPIII, to the phagophore to promote autophagy.</title>
        <authorList>
            <person name="Lynch-Day M.A."/>
            <person name="Bhandari D."/>
            <person name="Menon S."/>
            <person name="Huang J."/>
            <person name="Cai H."/>
            <person name="Bartholomew C.R."/>
            <person name="Brumell J.H."/>
            <person name="Ferro-Novick S."/>
            <person name="Klionsky D.J."/>
        </authorList>
    </citation>
    <scope>IDENTIFICATION IN THE TRAPP III COMPLEX</scope>
    <scope>SUBCELLULAR LOCATION</scope>
    <scope>FUNCTION OF THE TRAPP III COMPLEX</scope>
</reference>
<keyword id="KW-0002">3D-structure</keyword>
<keyword id="KW-0072">Autophagy</keyword>
<keyword id="KW-0256">Endoplasmic reticulum</keyword>
<keyword id="KW-0931">ER-Golgi transport</keyword>
<keyword id="KW-0333">Golgi apparatus</keyword>
<keyword id="KW-1185">Reference proteome</keyword>
<keyword id="KW-0813">Transport</keyword>
<protein>
    <recommendedName>
        <fullName>Trafficking protein particle complex subunit 20</fullName>
        <shortName>TRAPP subunit 20</shortName>
    </recommendedName>
    <alternativeName>
        <fullName>Transport protein particle 20 kDa subunit</fullName>
    </alternativeName>
</protein>
<dbReference type="EMBL" id="X70529">
    <property type="protein sequence ID" value="CAA49918.1"/>
    <property type="molecule type" value="Genomic_DNA"/>
</dbReference>
<dbReference type="EMBL" id="Z36123">
    <property type="protein sequence ID" value="CAA85217.1"/>
    <property type="molecule type" value="Genomic_DNA"/>
</dbReference>
<dbReference type="EMBL" id="BK006936">
    <property type="protein sequence ID" value="DAA07370.1"/>
    <property type="molecule type" value="Genomic_DNA"/>
</dbReference>
<dbReference type="PIR" id="S32957">
    <property type="entry name" value="S32957"/>
</dbReference>
<dbReference type="RefSeq" id="NP_009813.1">
    <property type="nucleotide sequence ID" value="NM_001178602.1"/>
</dbReference>
<dbReference type="PDB" id="7E2C">
    <property type="method" value="EM"/>
    <property type="resolution" value="4.18 A"/>
    <property type="chains" value="H=1-175"/>
</dbReference>
<dbReference type="PDB" id="7E2D">
    <property type="method" value="EM"/>
    <property type="resolution" value="3.71 A"/>
    <property type="chains" value="H=1-175"/>
</dbReference>
<dbReference type="PDB" id="7E8S">
    <property type="method" value="EM"/>
    <property type="resolution" value="4.36 A"/>
    <property type="chains" value="H/S=1-175"/>
</dbReference>
<dbReference type="PDB" id="7E8T">
    <property type="method" value="EM"/>
    <property type="resolution" value="3.80 A"/>
    <property type="chains" value="H=1-175"/>
</dbReference>
<dbReference type="PDB" id="7E93">
    <property type="method" value="EM"/>
    <property type="resolution" value="6.54 A"/>
    <property type="chains" value="H/S=1-175"/>
</dbReference>
<dbReference type="PDB" id="7E94">
    <property type="method" value="EM"/>
    <property type="resolution" value="4.67 A"/>
    <property type="chains" value="H/S=1-175"/>
</dbReference>
<dbReference type="PDB" id="7EA3">
    <property type="method" value="EM"/>
    <property type="resolution" value="4.31 A"/>
    <property type="chains" value="H/U=1-175"/>
</dbReference>
<dbReference type="PDB" id="7KMT">
    <property type="method" value="EM"/>
    <property type="resolution" value="3.70 A"/>
    <property type="chains" value="K=1-175"/>
</dbReference>
<dbReference type="PDB" id="7U05">
    <property type="method" value="EM"/>
    <property type="resolution" value="3.70 A"/>
    <property type="chains" value="K/k=1-175"/>
</dbReference>
<dbReference type="PDB" id="7U06">
    <property type="method" value="EM"/>
    <property type="resolution" value="4.20 A"/>
    <property type="chains" value="K/k=1-175"/>
</dbReference>
<dbReference type="PDBsum" id="7E2C"/>
<dbReference type="PDBsum" id="7E2D"/>
<dbReference type="PDBsum" id="7E8S"/>
<dbReference type="PDBsum" id="7E8T"/>
<dbReference type="PDBsum" id="7E93"/>
<dbReference type="PDBsum" id="7E94"/>
<dbReference type="PDBsum" id="7EA3"/>
<dbReference type="PDBsum" id="7KMT"/>
<dbReference type="PDBsum" id="7U05"/>
<dbReference type="PDBsum" id="7U06"/>
<dbReference type="EMDB" id="EMD-22928"/>
<dbReference type="EMDB" id="EMD-26254"/>
<dbReference type="EMDB" id="EMD-26255"/>
<dbReference type="EMDB" id="EMD-30954"/>
<dbReference type="EMDB" id="EMD-30955"/>
<dbReference type="EMDB" id="EMD-31021"/>
<dbReference type="EMDB" id="EMD-31022"/>
<dbReference type="EMDB" id="EMD-31027"/>
<dbReference type="EMDB" id="EMD-31028"/>
<dbReference type="EMDB" id="EMD-31038"/>
<dbReference type="SMR" id="P38334"/>
<dbReference type="BioGRID" id="32949">
    <property type="interactions" value="557"/>
</dbReference>
<dbReference type="ComplexPortal" id="CPX-1383">
    <property type="entry name" value="TRAPPIII protein complex"/>
</dbReference>
<dbReference type="ComplexPortal" id="CPX-1939">
    <property type="entry name" value="TRAPP II complex"/>
</dbReference>
<dbReference type="ComplexPortal" id="CPX-1940">
    <property type="entry name" value="TRAPPI protein complex"/>
</dbReference>
<dbReference type="DIP" id="DIP-1711N"/>
<dbReference type="FunCoup" id="P38334">
    <property type="interactions" value="422"/>
</dbReference>
<dbReference type="IntAct" id="P38334">
    <property type="interactions" value="22"/>
</dbReference>
<dbReference type="MINT" id="P38334"/>
<dbReference type="STRING" id="4932.YBR254C"/>
<dbReference type="iPTMnet" id="P38334"/>
<dbReference type="PaxDb" id="4932-YBR254C"/>
<dbReference type="PeptideAtlas" id="P38334"/>
<dbReference type="EnsemblFungi" id="YBR254C_mRNA">
    <property type="protein sequence ID" value="YBR254C"/>
    <property type="gene ID" value="YBR254C"/>
</dbReference>
<dbReference type="GeneID" id="852556"/>
<dbReference type="KEGG" id="sce:YBR254C"/>
<dbReference type="AGR" id="SGD:S000000458"/>
<dbReference type="SGD" id="S000000458">
    <property type="gene designation" value="TRS20"/>
</dbReference>
<dbReference type="VEuPathDB" id="FungiDB:YBR254C"/>
<dbReference type="eggNOG" id="KOG3487">
    <property type="taxonomic scope" value="Eukaryota"/>
</dbReference>
<dbReference type="HOGENOM" id="CLU_085828_0_0_1"/>
<dbReference type="InParanoid" id="P38334"/>
<dbReference type="OMA" id="RYMNQFI"/>
<dbReference type="OrthoDB" id="10252102at2759"/>
<dbReference type="BioCyc" id="YEAST:G3O-29179-MONOMER"/>
<dbReference type="Reactome" id="R-SCE-204005">
    <property type="pathway name" value="COPII-mediated vesicle transport"/>
</dbReference>
<dbReference type="Reactome" id="R-SCE-8876198">
    <property type="pathway name" value="RAB GEFs exchange GTP for GDP on RABs"/>
</dbReference>
<dbReference type="BioGRID-ORCS" id="852556">
    <property type="hits" value="3 hits in 10 CRISPR screens"/>
</dbReference>
<dbReference type="PRO" id="PR:P38334"/>
<dbReference type="Proteomes" id="UP000002311">
    <property type="component" value="Chromosome II"/>
</dbReference>
<dbReference type="RNAct" id="P38334">
    <property type="molecule type" value="protein"/>
</dbReference>
<dbReference type="GO" id="GO:0005737">
    <property type="term" value="C:cytoplasm"/>
    <property type="evidence" value="ECO:0000318"/>
    <property type="project" value="GO_Central"/>
</dbReference>
<dbReference type="GO" id="GO:0005829">
    <property type="term" value="C:cytosol"/>
    <property type="evidence" value="ECO:0007669"/>
    <property type="project" value="GOC"/>
</dbReference>
<dbReference type="GO" id="GO:0005783">
    <property type="term" value="C:endoplasmic reticulum"/>
    <property type="evidence" value="ECO:0007669"/>
    <property type="project" value="UniProtKB-SubCell"/>
</dbReference>
<dbReference type="GO" id="GO:0005634">
    <property type="term" value="C:nucleus"/>
    <property type="evidence" value="ECO:0000318"/>
    <property type="project" value="GO_Central"/>
</dbReference>
<dbReference type="GO" id="GO:0000407">
    <property type="term" value="C:phagophore assembly site"/>
    <property type="evidence" value="ECO:0000303"/>
    <property type="project" value="ComplexPortal"/>
</dbReference>
<dbReference type="GO" id="GO:0030008">
    <property type="term" value="C:TRAPP complex"/>
    <property type="evidence" value="ECO:0000318"/>
    <property type="project" value="GO_Central"/>
</dbReference>
<dbReference type="GO" id="GO:1990070">
    <property type="term" value="C:TRAPPI protein complex"/>
    <property type="evidence" value="ECO:0000314"/>
    <property type="project" value="SGD"/>
</dbReference>
<dbReference type="GO" id="GO:1990071">
    <property type="term" value="C:TRAPPII protein complex"/>
    <property type="evidence" value="ECO:0000314"/>
    <property type="project" value="SGD"/>
</dbReference>
<dbReference type="GO" id="GO:1990072">
    <property type="term" value="C:TRAPPIII protein complex"/>
    <property type="evidence" value="ECO:0000314"/>
    <property type="project" value="SGD"/>
</dbReference>
<dbReference type="GO" id="GO:0006888">
    <property type="term" value="P:endoplasmic reticulum to Golgi vesicle-mediated transport"/>
    <property type="evidence" value="ECO:0000314"/>
    <property type="project" value="ComplexPortal"/>
</dbReference>
<dbReference type="GO" id="GO:0006891">
    <property type="term" value="P:intra-Golgi vesicle-mediated transport"/>
    <property type="evidence" value="ECO:0000303"/>
    <property type="project" value="ComplexPortal"/>
</dbReference>
<dbReference type="GO" id="GO:0016236">
    <property type="term" value="P:macroautophagy"/>
    <property type="evidence" value="ECO:0000303"/>
    <property type="project" value="ComplexPortal"/>
</dbReference>
<dbReference type="GO" id="GO:0065003">
    <property type="term" value="P:protein-containing complex assembly"/>
    <property type="evidence" value="ECO:0000315"/>
    <property type="project" value="SGD"/>
</dbReference>
<dbReference type="GO" id="GO:0042147">
    <property type="term" value="P:retrograde transport, endosome to Golgi"/>
    <property type="evidence" value="ECO:0000303"/>
    <property type="project" value="ComplexPortal"/>
</dbReference>
<dbReference type="CDD" id="cd14825">
    <property type="entry name" value="TRAPPC2_sedlin"/>
    <property type="match status" value="1"/>
</dbReference>
<dbReference type="FunFam" id="3.30.450.70:FF:000020">
    <property type="entry name" value="TRapp subunit"/>
    <property type="match status" value="1"/>
</dbReference>
<dbReference type="Gene3D" id="3.30.450.70">
    <property type="match status" value="1"/>
</dbReference>
<dbReference type="InterPro" id="IPR011012">
    <property type="entry name" value="Longin-like_dom_sf"/>
</dbReference>
<dbReference type="InterPro" id="IPR006722">
    <property type="entry name" value="Sedlin"/>
</dbReference>
<dbReference type="PANTHER" id="PTHR12403">
    <property type="entry name" value="TRAFFICKING PROTEIN PARTICLE COMPLEX SUBUNIT 2"/>
    <property type="match status" value="1"/>
</dbReference>
<dbReference type="Pfam" id="PF04628">
    <property type="entry name" value="Sedlin_N"/>
    <property type="match status" value="1"/>
</dbReference>
<dbReference type="SUPFAM" id="SSF64356">
    <property type="entry name" value="SNARE-like"/>
    <property type="match status" value="1"/>
</dbReference>
<evidence type="ECO:0000269" key="1">
    <source>
    </source>
</evidence>
<evidence type="ECO:0000269" key="2">
    <source>
    </source>
</evidence>
<evidence type="ECO:0000269" key="3">
    <source>
    </source>
</evidence>
<evidence type="ECO:0000269" key="4">
    <source>
    </source>
</evidence>
<evidence type="ECO:0000269" key="5">
    <source>
    </source>
</evidence>
<evidence type="ECO:0000305" key="6"/>
<proteinExistence type="evidence at protein level"/>
<organism>
    <name type="scientific">Saccharomyces cerevisiae (strain ATCC 204508 / S288c)</name>
    <name type="common">Baker's yeast</name>
    <dbReference type="NCBI Taxonomy" id="559292"/>
    <lineage>
        <taxon>Eukaryota</taxon>
        <taxon>Fungi</taxon>
        <taxon>Dikarya</taxon>
        <taxon>Ascomycota</taxon>
        <taxon>Saccharomycotina</taxon>
        <taxon>Saccharomycetes</taxon>
        <taxon>Saccharomycetales</taxon>
        <taxon>Saccharomycetaceae</taxon>
        <taxon>Saccharomyces</taxon>
    </lineage>
</organism>
<accession>P38334</accession>
<accession>D6VQQ0</accession>
<gene>
    <name type="primary">TRS20</name>
    <name type="ordered locus">YBR254C</name>
    <name type="ORF">YBR1722</name>
</gene>
<name>TRS20_YEAST</name>